<name>Y910_MYCVP</name>
<gene>
    <name type="ordered locus">Mvan_0910</name>
</gene>
<evidence type="ECO:0000250" key="1"/>
<evidence type="ECO:0000305" key="2"/>
<keyword id="KW-0489">Methyltransferase</keyword>
<keyword id="KW-0949">S-adenosyl-L-methionine</keyword>
<keyword id="KW-0808">Transferase</keyword>
<organism>
    <name type="scientific">Mycolicibacterium vanbaalenii (strain DSM 7251 / JCM 13017 / BCRC 16820 / KCTC 9966 / NRRL B-24157 / PYR-1)</name>
    <name type="common">Mycobacterium vanbaalenii</name>
    <dbReference type="NCBI Taxonomy" id="350058"/>
    <lineage>
        <taxon>Bacteria</taxon>
        <taxon>Bacillati</taxon>
        <taxon>Actinomycetota</taxon>
        <taxon>Actinomycetes</taxon>
        <taxon>Mycobacteriales</taxon>
        <taxon>Mycobacteriaceae</taxon>
        <taxon>Mycolicibacterium</taxon>
    </lineage>
</organism>
<feature type="chain" id="PRO_0000361261" description="Putative S-adenosyl-L-methionine-dependent methyltransferase Mvan_0910">
    <location>
        <begin position="1"/>
        <end position="295"/>
    </location>
</feature>
<feature type="binding site" evidence="1">
    <location>
        <position position="126"/>
    </location>
    <ligand>
        <name>S-adenosyl-L-methionine</name>
        <dbReference type="ChEBI" id="CHEBI:59789"/>
    </ligand>
</feature>
<feature type="binding site" evidence="1">
    <location>
        <begin position="155"/>
        <end position="156"/>
    </location>
    <ligand>
        <name>S-adenosyl-L-methionine</name>
        <dbReference type="ChEBI" id="CHEBI:59789"/>
    </ligand>
</feature>
<sequence>MADNDRDGWDPASGVGLSATEGAAARAVVGRRKTPLVRDPFAEPLVCAVGVDSLTRLAQQSGVDGESGFAIPRMVDWIAARTRFFDDYFNAGQTDGIRQSVILGAGLDSRTYRLPWLPGATVYEIDQPGVVEFKNETMDRLQAQPLADRRPVAADLRGDWAPPLRIRGFDPSLPTMWSAEGLLPYLRAEDQMQVLDEISALSSKGSRLAADTVDDIGELAARIALSRGPRNPVAESDADLGGASSSHAVAQRLQSHGWLSNTRPAPQLFAAYAMPPLAEDQELYRKITVVTAMLR</sequence>
<comment type="function">
    <text evidence="1">Exhibits S-adenosyl-L-methionine-dependent methyltransferase activity.</text>
</comment>
<comment type="similarity">
    <text evidence="2">Belongs to the UPF0677 family.</text>
</comment>
<dbReference type="EC" id="2.1.1.-"/>
<dbReference type="EMBL" id="CP000511">
    <property type="protein sequence ID" value="ABM11748.1"/>
    <property type="molecule type" value="Genomic_DNA"/>
</dbReference>
<dbReference type="RefSeq" id="WP_011778183.1">
    <property type="nucleotide sequence ID" value="NC_008726.1"/>
</dbReference>
<dbReference type="SMR" id="A1T3J8"/>
<dbReference type="STRING" id="350058.Mvan_0910"/>
<dbReference type="KEGG" id="mva:Mvan_0910"/>
<dbReference type="eggNOG" id="COG3315">
    <property type="taxonomic scope" value="Bacteria"/>
</dbReference>
<dbReference type="HOGENOM" id="CLU_056160_2_1_11"/>
<dbReference type="Proteomes" id="UP000009159">
    <property type="component" value="Chromosome"/>
</dbReference>
<dbReference type="GO" id="GO:0008168">
    <property type="term" value="F:methyltransferase activity"/>
    <property type="evidence" value="ECO:0007669"/>
    <property type="project" value="UniProtKB-KW"/>
</dbReference>
<dbReference type="GO" id="GO:0032259">
    <property type="term" value="P:methylation"/>
    <property type="evidence" value="ECO:0007669"/>
    <property type="project" value="UniProtKB-KW"/>
</dbReference>
<dbReference type="Gene3D" id="3.40.50.150">
    <property type="entry name" value="Vaccinia Virus protein VP39"/>
    <property type="match status" value="1"/>
</dbReference>
<dbReference type="InterPro" id="IPR007213">
    <property type="entry name" value="Ppm1/Ppm2/Tcmp"/>
</dbReference>
<dbReference type="InterPro" id="IPR029063">
    <property type="entry name" value="SAM-dependent_MTases_sf"/>
</dbReference>
<dbReference type="InterPro" id="IPR011610">
    <property type="entry name" value="SAM_mthyl_Trfase_ML2640-like"/>
</dbReference>
<dbReference type="NCBIfam" id="TIGR00027">
    <property type="entry name" value="mthyl_TIGR00027"/>
    <property type="match status" value="1"/>
</dbReference>
<dbReference type="PANTHER" id="PTHR43619">
    <property type="entry name" value="S-ADENOSYL-L-METHIONINE-DEPENDENT METHYLTRANSFERASE YKTD-RELATED"/>
    <property type="match status" value="1"/>
</dbReference>
<dbReference type="PANTHER" id="PTHR43619:SF2">
    <property type="entry name" value="S-ADENOSYL-L-METHIONINE-DEPENDENT METHYLTRANSFERASES SUPERFAMILY PROTEIN"/>
    <property type="match status" value="1"/>
</dbReference>
<dbReference type="Pfam" id="PF04072">
    <property type="entry name" value="LCM"/>
    <property type="match status" value="1"/>
</dbReference>
<dbReference type="SUPFAM" id="SSF53335">
    <property type="entry name" value="S-adenosyl-L-methionine-dependent methyltransferases"/>
    <property type="match status" value="1"/>
</dbReference>
<proteinExistence type="inferred from homology"/>
<reference key="1">
    <citation type="submission" date="2006-12" db="EMBL/GenBank/DDBJ databases">
        <title>Complete sequence of Mycobacterium vanbaalenii PYR-1.</title>
        <authorList>
            <consortium name="US DOE Joint Genome Institute"/>
            <person name="Copeland A."/>
            <person name="Lucas S."/>
            <person name="Lapidus A."/>
            <person name="Barry K."/>
            <person name="Detter J.C."/>
            <person name="Glavina del Rio T."/>
            <person name="Hammon N."/>
            <person name="Israni S."/>
            <person name="Dalin E."/>
            <person name="Tice H."/>
            <person name="Pitluck S."/>
            <person name="Singan V."/>
            <person name="Schmutz J."/>
            <person name="Larimer F."/>
            <person name="Land M."/>
            <person name="Hauser L."/>
            <person name="Kyrpides N."/>
            <person name="Anderson I.J."/>
            <person name="Miller C."/>
            <person name="Richardson P."/>
        </authorList>
    </citation>
    <scope>NUCLEOTIDE SEQUENCE [LARGE SCALE GENOMIC DNA]</scope>
    <source>
        <strain>DSM 7251 / JCM 13017 / BCRC 16820 / KCTC 9966 / NRRL B-24157 / PYR-1</strain>
    </source>
</reference>
<accession>A1T3J8</accession>
<protein>
    <recommendedName>
        <fullName>Putative S-adenosyl-L-methionine-dependent methyltransferase Mvan_0910</fullName>
        <ecNumber>2.1.1.-</ecNumber>
    </recommendedName>
</protein>